<comment type="function">
    <text evidence="1">Processive glucosyltransferase involved in the biosynthesis of both the bilayer- and non-bilayer-forming membrane glucolipids. Is able to successively transfer up to three glucosyl residues to diacylglycerol (DAG), thereby catalyzing the formation of beta-monoglucosyl-DAG (3-O-(beta-D-glucopyranosyl)-1,2-diacyl-sn-glycerol), beta-diglucosyl-DAG (3-O-(beta-D-glucopyranosyl-beta-(1-&gt;6)-D-glucopyranosyl)-1,2-diacyl-sn-glycerol) and beta-triglucosyl-DAG (3-O-(beta-D-glucopyranosyl-beta-(1-&gt;6)-D-glucopyranosyl-beta-(1-&gt;6)-D-glucopyranosyl)-1,2-diacyl-sn-glycerol). Beta-diglucosyl-DAG is the predominant glycolipid found in Bacillales and is also used as a membrane anchor for lipoteichoic acid (LTA).</text>
</comment>
<comment type="catalytic activity">
    <reaction>
        <text>a 1,2-diacyl-3-O-(beta-D-glucopyranosyl)-sn-glycerol + UDP-alpha-D-glucose = a 1,2-diacyl-3-O-(beta-D-Glc-(1-&gt;6)-beta-D-Glc)-sn-glycerol + UDP + H(+)</text>
        <dbReference type="Rhea" id="RHEA:39031"/>
        <dbReference type="ChEBI" id="CHEBI:15378"/>
        <dbReference type="ChEBI" id="CHEBI:58223"/>
        <dbReference type="ChEBI" id="CHEBI:58885"/>
        <dbReference type="ChEBI" id="CHEBI:75799"/>
        <dbReference type="ChEBI" id="CHEBI:76264"/>
        <dbReference type="EC" id="2.4.1.315"/>
    </reaction>
</comment>
<comment type="catalytic activity">
    <reaction>
        <text>a 1,2-diacyl-3-O-(beta-D-Glc-(1-&gt;6)-beta-D-Glc)-sn-glycerol + UDP-alpha-D-glucose = a 1,2-diacyl-3-O-(beta-D-Glc-(1-&gt;6)-beta-D-Glc-(1-&gt;6)-beta-D-Glc)-sn-glycerol + UDP + H(+)</text>
        <dbReference type="Rhea" id="RHEA:39027"/>
        <dbReference type="ChEBI" id="CHEBI:15378"/>
        <dbReference type="ChEBI" id="CHEBI:58223"/>
        <dbReference type="ChEBI" id="CHEBI:58885"/>
        <dbReference type="ChEBI" id="CHEBI:76264"/>
        <dbReference type="ChEBI" id="CHEBI:76265"/>
        <dbReference type="EC" id="2.4.1.315"/>
    </reaction>
</comment>
<comment type="catalytic activity">
    <reaction evidence="1">
        <text>a 1,2-diacyl-sn-glycerol + UDP-alpha-D-glucose = a 1,2-diacyl-3-O-(beta-D-glucopyranosyl)-sn-glycerol + UDP + H(+)</text>
        <dbReference type="Rhea" id="RHEA:17285"/>
        <dbReference type="ChEBI" id="CHEBI:15378"/>
        <dbReference type="ChEBI" id="CHEBI:17815"/>
        <dbReference type="ChEBI" id="CHEBI:58223"/>
        <dbReference type="ChEBI" id="CHEBI:58885"/>
        <dbReference type="ChEBI" id="CHEBI:75799"/>
    </reaction>
</comment>
<comment type="pathway">
    <text evidence="1">Glycolipid metabolism; diglucosyl-diacylglycerol biosynthesis.</text>
</comment>
<comment type="subcellular location">
    <subcellularLocation>
        <location evidence="1">Cell membrane</location>
    </subcellularLocation>
</comment>
<comment type="similarity">
    <text evidence="1">Belongs to the glycosyltransferase 28 family. UgtP subfamily.</text>
</comment>
<keyword id="KW-0119">Carbohydrate metabolism</keyword>
<keyword id="KW-1003">Cell membrane</keyword>
<keyword id="KW-0328">Glycosyltransferase</keyword>
<keyword id="KW-0444">Lipid biosynthesis</keyword>
<keyword id="KW-0443">Lipid metabolism</keyword>
<keyword id="KW-0472">Membrane</keyword>
<keyword id="KW-0808">Transferase</keyword>
<protein>
    <recommendedName>
        <fullName evidence="1">Processive diacylglycerol beta-glucosyltransferase</fullName>
        <ecNumber>2.4.1.315</ecNumber>
    </recommendedName>
    <alternativeName>
        <fullName evidence="1">Beta-diglucosyldiacylglycerol synthase</fullName>
        <shortName evidence="1">Beta-DGS</shortName>
        <shortName evidence="1">DGlcDAG synthase</shortName>
        <shortName evidence="1">Glc2-DAG synthase</shortName>
    </alternativeName>
    <alternativeName>
        <fullName evidence="1">Beta-gentiobiosyldiacylglycerol synthase</fullName>
    </alternativeName>
    <alternativeName>
        <fullName evidence="1">Beta-monoglucosyldiacylglycerol synthase</fullName>
        <shortName evidence="1">Beta-MGS</shortName>
        <shortName evidence="1">MGlcDAG synthase</shortName>
    </alternativeName>
    <alternativeName>
        <fullName evidence="1">Beta-triglucosyldiacylglycerol synthase</fullName>
        <shortName evidence="1">TGlcDAG synthase</shortName>
    </alternativeName>
    <alternativeName>
        <fullName>Diglucosyl diacylglycerol synthase (1,6-linking)</fullName>
    </alternativeName>
    <alternativeName>
        <fullName evidence="1">Glucosyl-beta-1,6-glucosyldiacylglycerol synthase</fullName>
    </alternativeName>
    <alternativeName>
        <fullName evidence="1">UDP glucosyltransferase</fullName>
    </alternativeName>
    <alternativeName>
        <fullName evidence="1">UDP-glucose:1,2-diacylglycerol-3-beta-D-glucosyltransferase</fullName>
    </alternativeName>
</protein>
<accession>A0R9F0</accession>
<dbReference type="EC" id="2.4.1.315"/>
<dbReference type="EMBL" id="CP000485">
    <property type="protein sequence ID" value="ABK83843.1"/>
    <property type="molecule type" value="Genomic_DNA"/>
</dbReference>
<dbReference type="RefSeq" id="WP_000594710.1">
    <property type="nucleotide sequence ID" value="NC_008600.1"/>
</dbReference>
<dbReference type="SMR" id="A0R9F0"/>
<dbReference type="CAZy" id="GT28">
    <property type="family name" value="Glycosyltransferase Family 28"/>
</dbReference>
<dbReference type="KEGG" id="btl:BALH_0448"/>
<dbReference type="HOGENOM" id="CLU_028367_0_1_9"/>
<dbReference type="UniPathway" id="UPA00894"/>
<dbReference type="GO" id="GO:0005886">
    <property type="term" value="C:plasma membrane"/>
    <property type="evidence" value="ECO:0007669"/>
    <property type="project" value="UniProtKB-SubCell"/>
</dbReference>
<dbReference type="GO" id="GO:0047228">
    <property type="term" value="F:1,2-diacylglycerol 3-glucosyltransferase activity"/>
    <property type="evidence" value="ECO:0007669"/>
    <property type="project" value="UniProtKB-UniRule"/>
</dbReference>
<dbReference type="GO" id="GO:0009246">
    <property type="term" value="P:enterobacterial common antigen biosynthetic process"/>
    <property type="evidence" value="ECO:0007669"/>
    <property type="project" value="UniProtKB-UniPathway"/>
</dbReference>
<dbReference type="GO" id="GO:0009247">
    <property type="term" value="P:glycolipid biosynthetic process"/>
    <property type="evidence" value="ECO:0007669"/>
    <property type="project" value="UniProtKB-UniRule"/>
</dbReference>
<dbReference type="GO" id="GO:0070395">
    <property type="term" value="P:lipoteichoic acid biosynthetic process"/>
    <property type="evidence" value="ECO:0007669"/>
    <property type="project" value="UniProtKB-UniRule"/>
</dbReference>
<dbReference type="CDD" id="cd17507">
    <property type="entry name" value="GT28_Beta-DGS-like"/>
    <property type="match status" value="1"/>
</dbReference>
<dbReference type="Gene3D" id="3.40.50.2000">
    <property type="entry name" value="Glycogen Phosphorylase B"/>
    <property type="match status" value="1"/>
</dbReference>
<dbReference type="HAMAP" id="MF_01280">
    <property type="entry name" value="Diacylglyc_glucosyltr"/>
    <property type="match status" value="1"/>
</dbReference>
<dbReference type="InterPro" id="IPR009695">
    <property type="entry name" value="Diacylglyc_glucosyltr_N"/>
</dbReference>
<dbReference type="InterPro" id="IPR007235">
    <property type="entry name" value="Glyco_trans_28_C"/>
</dbReference>
<dbReference type="InterPro" id="IPR050519">
    <property type="entry name" value="Glycosyltransf_28_UgtP"/>
</dbReference>
<dbReference type="InterPro" id="IPR023589">
    <property type="entry name" value="Pro_diacylglycrl_glcsylTrfase"/>
</dbReference>
<dbReference type="NCBIfam" id="NF010135">
    <property type="entry name" value="PRK13609.1"/>
    <property type="match status" value="1"/>
</dbReference>
<dbReference type="PANTHER" id="PTHR43025">
    <property type="entry name" value="MONOGALACTOSYLDIACYLGLYCEROL SYNTHASE"/>
    <property type="match status" value="1"/>
</dbReference>
<dbReference type="PANTHER" id="PTHR43025:SF3">
    <property type="entry name" value="MONOGALACTOSYLDIACYLGLYCEROL SYNTHASE 1, CHLOROPLASTIC"/>
    <property type="match status" value="1"/>
</dbReference>
<dbReference type="Pfam" id="PF04101">
    <property type="entry name" value="Glyco_tran_28_C"/>
    <property type="match status" value="1"/>
</dbReference>
<dbReference type="Pfam" id="PF06925">
    <property type="entry name" value="MGDG_synth"/>
    <property type="match status" value="1"/>
</dbReference>
<dbReference type="SUPFAM" id="SSF53756">
    <property type="entry name" value="UDP-Glycosyltransferase/glycogen phosphorylase"/>
    <property type="match status" value="1"/>
</dbReference>
<evidence type="ECO:0000255" key="1">
    <source>
        <dbReference type="HAMAP-Rule" id="MF_01280"/>
    </source>
</evidence>
<proteinExistence type="inferred from homology"/>
<gene>
    <name evidence="1" type="primary">ugtP</name>
    <name type="ordered locus">BALH_0448</name>
</gene>
<reference key="1">
    <citation type="journal article" date="2007" name="J. Bacteriol.">
        <title>The complete genome sequence of Bacillus thuringiensis Al Hakam.</title>
        <authorList>
            <person name="Challacombe J.F."/>
            <person name="Altherr M.R."/>
            <person name="Xie G."/>
            <person name="Bhotika S.S."/>
            <person name="Brown N."/>
            <person name="Bruce D."/>
            <person name="Campbell C.S."/>
            <person name="Campbell M.L."/>
            <person name="Chen J."/>
            <person name="Chertkov O."/>
            <person name="Cleland C."/>
            <person name="Dimitrijevic M."/>
            <person name="Doggett N.A."/>
            <person name="Fawcett J.J."/>
            <person name="Glavina T."/>
            <person name="Goodwin L.A."/>
            <person name="Green L.D."/>
            <person name="Han C.S."/>
            <person name="Hill K.K."/>
            <person name="Hitchcock P."/>
            <person name="Jackson P.J."/>
            <person name="Keim P."/>
            <person name="Kewalramani A.R."/>
            <person name="Longmire J."/>
            <person name="Lucas S."/>
            <person name="Malfatti S."/>
            <person name="Martinez D."/>
            <person name="McMurry K."/>
            <person name="Meincke L.J."/>
            <person name="Misra M."/>
            <person name="Moseman B.L."/>
            <person name="Mundt M."/>
            <person name="Munk A.C."/>
            <person name="Okinaka R.T."/>
            <person name="Parson-Quintana B."/>
            <person name="Reilly L.P."/>
            <person name="Richardson P."/>
            <person name="Robinson D.L."/>
            <person name="Saunders E."/>
            <person name="Tapia R."/>
            <person name="Tesmer J.G."/>
            <person name="Thayer N."/>
            <person name="Thompson L.S."/>
            <person name="Tice H."/>
            <person name="Ticknor L.O."/>
            <person name="Wills P.L."/>
            <person name="Gilna P."/>
            <person name="Brettin T.S."/>
        </authorList>
    </citation>
    <scope>NUCLEOTIDE SEQUENCE [LARGE SCALE GENOMIC DNA]</scope>
    <source>
        <strain>Al Hakam</strain>
    </source>
</reference>
<name>UGTP_BACAH</name>
<organism>
    <name type="scientific">Bacillus thuringiensis (strain Al Hakam)</name>
    <dbReference type="NCBI Taxonomy" id="412694"/>
    <lineage>
        <taxon>Bacteria</taxon>
        <taxon>Bacillati</taxon>
        <taxon>Bacillota</taxon>
        <taxon>Bacilli</taxon>
        <taxon>Bacillales</taxon>
        <taxon>Bacillaceae</taxon>
        <taxon>Bacillus</taxon>
        <taxon>Bacillus cereus group</taxon>
    </lineage>
</organism>
<feature type="chain" id="PRO_0000308446" description="Processive diacylglycerol beta-glucosyltransferase">
    <location>
        <begin position="1"/>
        <end position="388"/>
    </location>
</feature>
<sequence length="388" mass="43819">MIKNPKVLILTAHYGNGHVQVAKTLEQTFRQKGIKDVIVCDLFGESHPVITDITKYLYLKSYTIGKELYRLFYYGVEKIYDKKIASWYANFGRKRLKLLLQAEKPDIVINTFPIIAVPELKKQTGISIPVYNVLTDFCVHKIWIHREVDRYFVATDHVKKVMVDIGVPAEQIVETGIPIRSSFELKINPDIIYNKYQLCKNKKILLIVAGAHGVLGSVKELCQSFMSVPDLQVVVVCGKNEALKQDLVGVQETNPDALKVFGYVENIDELFRVTSCMITKPGGITLSEAAALQVPVILYKPVPGQENENAMYFERKGAAVVIRDDSEVFAKTEALLQDDMKLLQMKEAMKSIYRPEPADHIVDTILEENHVEPNHIPIKSPALAQSFT</sequence>